<comment type="function">
    <text evidence="1">Catalyzes the decarboxylation of four acetate groups of uroporphyrinogen-III to yield coproporphyrinogen-III.</text>
</comment>
<comment type="catalytic activity">
    <reaction evidence="1">
        <text>uroporphyrinogen III + 4 H(+) = coproporphyrinogen III + 4 CO2</text>
        <dbReference type="Rhea" id="RHEA:19865"/>
        <dbReference type="ChEBI" id="CHEBI:15378"/>
        <dbReference type="ChEBI" id="CHEBI:16526"/>
        <dbReference type="ChEBI" id="CHEBI:57308"/>
        <dbReference type="ChEBI" id="CHEBI:57309"/>
        <dbReference type="EC" id="4.1.1.37"/>
    </reaction>
</comment>
<comment type="pathway">
    <text evidence="1">Porphyrin-containing compound metabolism; protoporphyrin-IX biosynthesis; coproporphyrinogen-III from 5-aminolevulinate: step 4/4.</text>
</comment>
<comment type="subunit">
    <text evidence="1">Homodimer.</text>
</comment>
<comment type="subcellular location">
    <subcellularLocation>
        <location evidence="1">Cytoplasm</location>
    </subcellularLocation>
</comment>
<comment type="similarity">
    <text evidence="1">Belongs to the uroporphyrinogen decarboxylase family.</text>
</comment>
<dbReference type="EC" id="4.1.1.37" evidence="1"/>
<dbReference type="EMBL" id="CP000580">
    <property type="protein sequence ID" value="ABN97987.1"/>
    <property type="molecule type" value="Genomic_DNA"/>
</dbReference>
<dbReference type="SMR" id="A3PYL0"/>
<dbReference type="KEGG" id="mjl:Mjls_2201"/>
<dbReference type="HOGENOM" id="CLU_040933_0_1_11"/>
<dbReference type="BioCyc" id="MSP164757:G1G8C-2221-MONOMER"/>
<dbReference type="UniPathway" id="UPA00251">
    <property type="reaction ID" value="UER00321"/>
</dbReference>
<dbReference type="GO" id="GO:0005829">
    <property type="term" value="C:cytosol"/>
    <property type="evidence" value="ECO:0007669"/>
    <property type="project" value="TreeGrafter"/>
</dbReference>
<dbReference type="GO" id="GO:0004853">
    <property type="term" value="F:uroporphyrinogen decarboxylase activity"/>
    <property type="evidence" value="ECO:0007669"/>
    <property type="project" value="UniProtKB-UniRule"/>
</dbReference>
<dbReference type="GO" id="GO:0006782">
    <property type="term" value="P:protoporphyrinogen IX biosynthetic process"/>
    <property type="evidence" value="ECO:0007669"/>
    <property type="project" value="UniProtKB-UniRule"/>
</dbReference>
<dbReference type="CDD" id="cd00717">
    <property type="entry name" value="URO-D"/>
    <property type="match status" value="1"/>
</dbReference>
<dbReference type="Gene3D" id="3.20.20.210">
    <property type="match status" value="1"/>
</dbReference>
<dbReference type="HAMAP" id="MF_00218">
    <property type="entry name" value="URO_D"/>
    <property type="match status" value="1"/>
</dbReference>
<dbReference type="InterPro" id="IPR038071">
    <property type="entry name" value="UROD/MetE-like_sf"/>
</dbReference>
<dbReference type="InterPro" id="IPR006361">
    <property type="entry name" value="Uroporphyrinogen_deCO2ase_HemE"/>
</dbReference>
<dbReference type="InterPro" id="IPR000257">
    <property type="entry name" value="Uroporphyrinogen_deCOase"/>
</dbReference>
<dbReference type="NCBIfam" id="TIGR01464">
    <property type="entry name" value="hemE"/>
    <property type="match status" value="1"/>
</dbReference>
<dbReference type="PANTHER" id="PTHR21091">
    <property type="entry name" value="METHYLTETRAHYDROFOLATE:HOMOCYSTEINE METHYLTRANSFERASE RELATED"/>
    <property type="match status" value="1"/>
</dbReference>
<dbReference type="PANTHER" id="PTHR21091:SF169">
    <property type="entry name" value="UROPORPHYRINOGEN DECARBOXYLASE"/>
    <property type="match status" value="1"/>
</dbReference>
<dbReference type="Pfam" id="PF01208">
    <property type="entry name" value="URO-D"/>
    <property type="match status" value="1"/>
</dbReference>
<dbReference type="SUPFAM" id="SSF51726">
    <property type="entry name" value="UROD/MetE-like"/>
    <property type="match status" value="1"/>
</dbReference>
<dbReference type="PROSITE" id="PS00906">
    <property type="entry name" value="UROD_1"/>
    <property type="match status" value="1"/>
</dbReference>
<dbReference type="PROSITE" id="PS00907">
    <property type="entry name" value="UROD_2"/>
    <property type="match status" value="1"/>
</dbReference>
<feature type="chain" id="PRO_1000023922" description="Uroporphyrinogen decarboxylase">
    <location>
        <begin position="1"/>
        <end position="354"/>
    </location>
</feature>
<feature type="binding site" evidence="1">
    <location>
        <begin position="30"/>
        <end position="34"/>
    </location>
    <ligand>
        <name>substrate</name>
    </ligand>
</feature>
<feature type="binding site" evidence="1">
    <location>
        <position position="79"/>
    </location>
    <ligand>
        <name>substrate</name>
    </ligand>
</feature>
<feature type="binding site" evidence="1">
    <location>
        <position position="154"/>
    </location>
    <ligand>
        <name>substrate</name>
    </ligand>
</feature>
<feature type="binding site" evidence="1">
    <location>
        <position position="209"/>
    </location>
    <ligand>
        <name>substrate</name>
    </ligand>
</feature>
<feature type="binding site" evidence="1">
    <location>
        <position position="333"/>
    </location>
    <ligand>
        <name>substrate</name>
    </ligand>
</feature>
<feature type="site" description="Transition state stabilizer" evidence="1">
    <location>
        <position position="79"/>
    </location>
</feature>
<reference key="1">
    <citation type="submission" date="2007-02" db="EMBL/GenBank/DDBJ databases">
        <title>Complete sequence of Mycobacterium sp. JLS.</title>
        <authorList>
            <consortium name="US DOE Joint Genome Institute"/>
            <person name="Copeland A."/>
            <person name="Lucas S."/>
            <person name="Lapidus A."/>
            <person name="Barry K."/>
            <person name="Detter J.C."/>
            <person name="Glavina del Rio T."/>
            <person name="Hammon N."/>
            <person name="Israni S."/>
            <person name="Dalin E."/>
            <person name="Tice H."/>
            <person name="Pitluck S."/>
            <person name="Chain P."/>
            <person name="Malfatti S."/>
            <person name="Shin M."/>
            <person name="Vergez L."/>
            <person name="Schmutz J."/>
            <person name="Larimer F."/>
            <person name="Land M."/>
            <person name="Hauser L."/>
            <person name="Kyrpides N."/>
            <person name="Mikhailova N."/>
            <person name="Miller C.D."/>
            <person name="Anderson A.J."/>
            <person name="Sims R.C."/>
            <person name="Richardson P."/>
        </authorList>
    </citation>
    <scope>NUCLEOTIDE SEQUENCE [LARGE SCALE GENOMIC DNA]</scope>
    <source>
        <strain>JLS</strain>
    </source>
</reference>
<keyword id="KW-0963">Cytoplasm</keyword>
<keyword id="KW-0210">Decarboxylase</keyword>
<keyword id="KW-0456">Lyase</keyword>
<keyword id="KW-0627">Porphyrin biosynthesis</keyword>
<sequence length="354" mass="37519">MNTRRELPDSPYLAAARGRKPARVPVWFMRQAGRSLPEYRALRARNTMMQACFDADLITEITLQPVRRHGVDAAILFSDIVVPLRASGIALDIVPDVGPVIDHPVRTAADVAAIRPLERQTVEPVEQAVRMLTAALGDVPLIGFAGAPFTLASYLVEGGPSKHHEHTKAMMLGAPDTWHALMSALTDVTIAFLQAQVDAGVDAIQVFDSWAGTLSLADYRAYVLPHSARVFQALAPAGVPMTHFGVGTAELLGAMSEAIATSGAPGVVGVDWRTSLTDAAGRVERGSALQGNLDPVVLLAGWPVVERAVRAVVEDGRRAVDAGAAGHVFNLGHGVLPATDPEIVTATVELVHSL</sequence>
<evidence type="ECO:0000255" key="1">
    <source>
        <dbReference type="HAMAP-Rule" id="MF_00218"/>
    </source>
</evidence>
<gene>
    <name evidence="1" type="primary">hemE</name>
    <name type="ordered locus">Mjls_2201</name>
</gene>
<protein>
    <recommendedName>
        <fullName evidence="1">Uroporphyrinogen decarboxylase</fullName>
        <shortName evidence="1">UPD</shortName>
        <shortName evidence="1">URO-D</shortName>
        <ecNumber evidence="1">4.1.1.37</ecNumber>
    </recommendedName>
</protein>
<name>DCUP_MYCSJ</name>
<accession>A3PYL0</accession>
<proteinExistence type="inferred from homology"/>
<organism>
    <name type="scientific">Mycobacterium sp. (strain JLS)</name>
    <dbReference type="NCBI Taxonomy" id="164757"/>
    <lineage>
        <taxon>Bacteria</taxon>
        <taxon>Bacillati</taxon>
        <taxon>Actinomycetota</taxon>
        <taxon>Actinomycetes</taxon>
        <taxon>Mycobacteriales</taxon>
        <taxon>Mycobacteriaceae</taxon>
        <taxon>Mycobacterium</taxon>
    </lineage>
</organism>